<feature type="chain" id="PRO_0000160714" description="Alcohol dehydrogenase 3">
    <location>
        <begin position="1"/>
        <end position="380"/>
    </location>
</feature>
<feature type="binding site" evidence="2">
    <location>
        <position position="48"/>
    </location>
    <ligand>
        <name>Zn(2+)</name>
        <dbReference type="ChEBI" id="CHEBI:29105"/>
        <label>1</label>
        <note>catalytic</note>
    </ligand>
</feature>
<feature type="binding site" evidence="2">
    <location>
        <position position="50"/>
    </location>
    <ligand>
        <name>an alcohol</name>
        <dbReference type="ChEBI" id="CHEBI:30879"/>
    </ligand>
</feature>
<feature type="binding site" evidence="2">
    <location>
        <position position="50"/>
    </location>
    <ligand>
        <name>NAD(+)</name>
        <dbReference type="ChEBI" id="CHEBI:57540"/>
    </ligand>
</feature>
<feature type="binding site" evidence="2">
    <location>
        <position position="50"/>
    </location>
    <ligand>
        <name>Zn(2+)</name>
        <dbReference type="ChEBI" id="CHEBI:29105"/>
        <label>1</label>
        <note>catalytic</note>
    </ligand>
</feature>
<feature type="binding site" evidence="1">
    <location>
        <position position="70"/>
    </location>
    <ligand>
        <name>an alcohol</name>
        <dbReference type="ChEBI" id="CHEBI:30879"/>
    </ligand>
</feature>
<feature type="binding site" evidence="2">
    <location>
        <position position="70"/>
    </location>
    <ligand>
        <name>Zn(2+)</name>
        <dbReference type="ChEBI" id="CHEBI:29105"/>
        <label>1</label>
        <note>catalytic</note>
    </ligand>
</feature>
<feature type="binding site" evidence="2">
    <location>
        <position position="100"/>
    </location>
    <ligand>
        <name>Zn(2+)</name>
        <dbReference type="ChEBI" id="CHEBI:29105"/>
        <label>2</label>
    </ligand>
</feature>
<feature type="binding site" evidence="2">
    <location>
        <position position="103"/>
    </location>
    <ligand>
        <name>Zn(2+)</name>
        <dbReference type="ChEBI" id="CHEBI:29105"/>
        <label>2</label>
    </ligand>
</feature>
<feature type="binding site" evidence="2">
    <location>
        <position position="106"/>
    </location>
    <ligand>
        <name>Zn(2+)</name>
        <dbReference type="ChEBI" id="CHEBI:29105"/>
        <label>2</label>
    </ligand>
</feature>
<feature type="binding site" evidence="2">
    <location>
        <position position="114"/>
    </location>
    <ligand>
        <name>Zn(2+)</name>
        <dbReference type="ChEBI" id="CHEBI:29105"/>
        <label>2</label>
    </ligand>
</feature>
<feature type="binding site" evidence="2">
    <location>
        <position position="178"/>
    </location>
    <ligand>
        <name>Zn(2+)</name>
        <dbReference type="ChEBI" id="CHEBI:29105"/>
        <label>1</label>
        <note>catalytic</note>
    </ligand>
</feature>
<feature type="binding site" evidence="2">
    <location>
        <begin position="203"/>
        <end position="208"/>
    </location>
    <ligand>
        <name>NAD(+)</name>
        <dbReference type="ChEBI" id="CHEBI:57540"/>
    </ligand>
</feature>
<feature type="binding site" evidence="2">
    <location>
        <position position="227"/>
    </location>
    <ligand>
        <name>NAD(+)</name>
        <dbReference type="ChEBI" id="CHEBI:57540"/>
    </ligand>
</feature>
<feature type="binding site" evidence="2">
    <location>
        <position position="232"/>
    </location>
    <ligand>
        <name>NAD(+)</name>
        <dbReference type="ChEBI" id="CHEBI:57540"/>
    </ligand>
</feature>
<feature type="binding site" evidence="2">
    <location>
        <position position="273"/>
    </location>
    <ligand>
        <name>NAD(+)</name>
        <dbReference type="ChEBI" id="CHEBI:57540"/>
    </ligand>
</feature>
<feature type="binding site" evidence="1">
    <location>
        <begin position="296"/>
        <end position="298"/>
    </location>
    <ligand>
        <name>NAD(+)</name>
        <dbReference type="ChEBI" id="CHEBI:57540"/>
    </ligand>
</feature>
<feature type="binding site" evidence="2">
    <location>
        <position position="296"/>
    </location>
    <ligand>
        <name>NAD(+)</name>
        <dbReference type="ChEBI" id="CHEBI:57540"/>
    </ligand>
</feature>
<feature type="binding site" evidence="2">
    <location>
        <position position="323"/>
    </location>
    <ligand>
        <name>NAD(+)</name>
        <dbReference type="ChEBI" id="CHEBI:57540"/>
    </ligand>
</feature>
<feature type="binding site" evidence="2">
    <location>
        <position position="373"/>
    </location>
    <ligand>
        <name>NAD(+)</name>
        <dbReference type="ChEBI" id="CHEBI:57540"/>
    </ligand>
</feature>
<protein>
    <recommendedName>
        <fullName>Alcohol dehydrogenase 3</fullName>
        <ecNumber evidence="2">1.1.1.1</ecNumber>
    </recommendedName>
</protein>
<accession>P14675</accession>
<organism>
    <name type="scientific">Solanum tuberosum</name>
    <name type="common">Potato</name>
    <dbReference type="NCBI Taxonomy" id="4113"/>
    <lineage>
        <taxon>Eukaryota</taxon>
        <taxon>Viridiplantae</taxon>
        <taxon>Streptophyta</taxon>
        <taxon>Embryophyta</taxon>
        <taxon>Tracheophyta</taxon>
        <taxon>Spermatophyta</taxon>
        <taxon>Magnoliopsida</taxon>
        <taxon>eudicotyledons</taxon>
        <taxon>Gunneridae</taxon>
        <taxon>Pentapetalae</taxon>
        <taxon>asterids</taxon>
        <taxon>lamiids</taxon>
        <taxon>Solanales</taxon>
        <taxon>Solanaceae</taxon>
        <taxon>Solanoideae</taxon>
        <taxon>Solaneae</taxon>
        <taxon>Solanum</taxon>
    </lineage>
</organism>
<dbReference type="EC" id="1.1.1.1" evidence="2"/>
<dbReference type="EMBL" id="M25152">
    <property type="protein sequence ID" value="AAA33808.1"/>
    <property type="molecule type" value="mRNA"/>
</dbReference>
<dbReference type="PIR" id="S11853">
    <property type="entry name" value="DEPOA1"/>
</dbReference>
<dbReference type="RefSeq" id="NP_001275080.1">
    <property type="nucleotide sequence ID" value="NM_001288151.1"/>
</dbReference>
<dbReference type="SMR" id="P14675"/>
<dbReference type="STRING" id="4113.P14675"/>
<dbReference type="PaxDb" id="4113-PGSC0003DMT400079071"/>
<dbReference type="GeneID" id="102577519"/>
<dbReference type="KEGG" id="sot:102577519"/>
<dbReference type="eggNOG" id="KOG0022">
    <property type="taxonomic scope" value="Eukaryota"/>
</dbReference>
<dbReference type="InParanoid" id="P14675"/>
<dbReference type="OrthoDB" id="417550at2759"/>
<dbReference type="Proteomes" id="UP000011115">
    <property type="component" value="Unassembled WGS sequence"/>
</dbReference>
<dbReference type="ExpressionAtlas" id="P14675">
    <property type="expression patterns" value="baseline"/>
</dbReference>
<dbReference type="GO" id="GO:0005829">
    <property type="term" value="C:cytosol"/>
    <property type="evidence" value="ECO:0000318"/>
    <property type="project" value="GO_Central"/>
</dbReference>
<dbReference type="GO" id="GO:0004022">
    <property type="term" value="F:alcohol dehydrogenase (NAD+) activity"/>
    <property type="evidence" value="ECO:0000318"/>
    <property type="project" value="GO_Central"/>
</dbReference>
<dbReference type="GO" id="GO:0051903">
    <property type="term" value="F:S-(hydroxymethyl)glutathione dehydrogenase [NAD(P)+] activity"/>
    <property type="evidence" value="ECO:0000318"/>
    <property type="project" value="GO_Central"/>
</dbReference>
<dbReference type="GO" id="GO:0008270">
    <property type="term" value="F:zinc ion binding"/>
    <property type="evidence" value="ECO:0000318"/>
    <property type="project" value="GO_Central"/>
</dbReference>
<dbReference type="GO" id="GO:0009820">
    <property type="term" value="P:alkaloid metabolic process"/>
    <property type="evidence" value="ECO:0007669"/>
    <property type="project" value="UniProtKB-ARBA"/>
</dbReference>
<dbReference type="GO" id="GO:0046294">
    <property type="term" value="P:formaldehyde catabolic process"/>
    <property type="evidence" value="ECO:0000318"/>
    <property type="project" value="GO_Central"/>
</dbReference>
<dbReference type="CDD" id="cd08301">
    <property type="entry name" value="alcohol_DH_plants"/>
    <property type="match status" value="1"/>
</dbReference>
<dbReference type="FunFam" id="3.90.180.10:FF:000067">
    <property type="entry name" value="alcohol dehydrogenase 1-like isoform X1"/>
    <property type="match status" value="1"/>
</dbReference>
<dbReference type="FunFam" id="3.40.50.720:FF:001292">
    <property type="entry name" value="Alcohol dehydrogenase class-P"/>
    <property type="match status" value="1"/>
</dbReference>
<dbReference type="Gene3D" id="3.90.180.10">
    <property type="entry name" value="Medium-chain alcohol dehydrogenases, catalytic domain"/>
    <property type="match status" value="1"/>
</dbReference>
<dbReference type="Gene3D" id="3.40.50.720">
    <property type="entry name" value="NAD(P)-binding Rossmann-like Domain"/>
    <property type="match status" value="1"/>
</dbReference>
<dbReference type="InterPro" id="IPR013149">
    <property type="entry name" value="ADH-like_C"/>
</dbReference>
<dbReference type="InterPro" id="IPR013154">
    <property type="entry name" value="ADH-like_N"/>
</dbReference>
<dbReference type="InterPro" id="IPR002328">
    <property type="entry name" value="ADH_Zn_CS"/>
</dbReference>
<dbReference type="InterPro" id="IPR011032">
    <property type="entry name" value="GroES-like_sf"/>
</dbReference>
<dbReference type="InterPro" id="IPR036291">
    <property type="entry name" value="NAD(P)-bd_dom_sf"/>
</dbReference>
<dbReference type="PANTHER" id="PTHR43880">
    <property type="entry name" value="ALCOHOL DEHYDROGENASE"/>
    <property type="match status" value="1"/>
</dbReference>
<dbReference type="PANTHER" id="PTHR43880:SF40">
    <property type="entry name" value="ALCOHOL DEHYDROGENASE 2"/>
    <property type="match status" value="1"/>
</dbReference>
<dbReference type="Pfam" id="PF08240">
    <property type="entry name" value="ADH_N"/>
    <property type="match status" value="1"/>
</dbReference>
<dbReference type="Pfam" id="PF00107">
    <property type="entry name" value="ADH_zinc_N"/>
    <property type="match status" value="1"/>
</dbReference>
<dbReference type="SUPFAM" id="SSF50129">
    <property type="entry name" value="GroES-like"/>
    <property type="match status" value="2"/>
</dbReference>
<dbReference type="SUPFAM" id="SSF51735">
    <property type="entry name" value="NAD(P)-binding Rossmann-fold domains"/>
    <property type="match status" value="1"/>
</dbReference>
<dbReference type="PROSITE" id="PS00059">
    <property type="entry name" value="ADH_ZINC"/>
    <property type="match status" value="1"/>
</dbReference>
<gene>
    <name type="primary">ADH3</name>
</gene>
<comment type="catalytic activity">
    <reaction evidence="2">
        <text>a primary alcohol + NAD(+) = an aldehyde + NADH + H(+)</text>
        <dbReference type="Rhea" id="RHEA:10736"/>
        <dbReference type="ChEBI" id="CHEBI:15378"/>
        <dbReference type="ChEBI" id="CHEBI:15734"/>
        <dbReference type="ChEBI" id="CHEBI:17478"/>
        <dbReference type="ChEBI" id="CHEBI:57540"/>
        <dbReference type="ChEBI" id="CHEBI:57945"/>
        <dbReference type="EC" id="1.1.1.1"/>
    </reaction>
</comment>
<comment type="catalytic activity">
    <reaction evidence="2">
        <text>a secondary alcohol + NAD(+) = a ketone + NADH + H(+)</text>
        <dbReference type="Rhea" id="RHEA:10740"/>
        <dbReference type="ChEBI" id="CHEBI:15378"/>
        <dbReference type="ChEBI" id="CHEBI:17087"/>
        <dbReference type="ChEBI" id="CHEBI:35681"/>
        <dbReference type="ChEBI" id="CHEBI:57540"/>
        <dbReference type="ChEBI" id="CHEBI:57945"/>
        <dbReference type="EC" id="1.1.1.1"/>
    </reaction>
</comment>
<comment type="cofactor">
    <cofactor evidence="2">
        <name>Zn(2+)</name>
        <dbReference type="ChEBI" id="CHEBI:29105"/>
    </cofactor>
    <text evidence="2">Binds 2 Zn(2+) ions per subunit.</text>
</comment>
<comment type="subunit">
    <text evidence="2">Homodimer (By similarity). Homotetramer.</text>
</comment>
<comment type="subcellular location">
    <subcellularLocation>
        <location evidence="2">Cytoplasm</location>
    </subcellularLocation>
</comment>
<comment type="similarity">
    <text evidence="3">Belongs to the zinc-containing alcohol dehydrogenase family.</text>
</comment>
<evidence type="ECO:0000250" key="1">
    <source>
        <dbReference type="UniProtKB" id="P00327"/>
    </source>
</evidence>
<evidence type="ECO:0000250" key="2">
    <source>
        <dbReference type="UniProtKB" id="P06525"/>
    </source>
</evidence>
<evidence type="ECO:0000305" key="3"/>
<proteinExistence type="evidence at transcript level"/>
<name>ADH3_SOLTU</name>
<reference key="1">
    <citation type="journal article" date="1990" name="Nucleic Acids Res.">
        <title>Nucleotide sequence of two potato alcohol dehydrogenase cDNAs.</title>
        <authorList>
            <person name="Matton D.P."/>
            <person name="Brisson N."/>
        </authorList>
    </citation>
    <scope>NUCLEOTIDE SEQUENCE [MRNA]</scope>
</reference>
<sequence length="380" mass="41142">MSTTVGQVIRCKAAVAWEAGKPLVMEEVDVAPPQKMEVRLKILYTSLCHTDVYFWEAKGQNPVFPRILGHEAAGIVESVGEGVTELAPGDHVLPVFTGECKDCAHCKSEESNMCSLLRINTDRGVMINDGQSRFSINGKPIYHFVGTSTFSEYTVVHVGCVAKINPLAPLDKVCVLSCGISTGLGATLNVAKPTKGSSVAIFGLGAVGLAAAEGARIAGASRIIGVDLNASRFEQAKKFGVTEFVNPKDYSKPVQEVIAEMTDGGVDRSVECTGHIDAMISAFECVHDGWGVAVLVGVPHKEAVFKTHPMNFLNERTLKGTFFGNYKPRSDIPSVVEKYMNKELELEKFITHTLPFAEINKAFDLMLKGEGLRCIITMED</sequence>
<keyword id="KW-0963">Cytoplasm</keyword>
<keyword id="KW-0479">Metal-binding</keyword>
<keyword id="KW-0520">NAD</keyword>
<keyword id="KW-0560">Oxidoreductase</keyword>
<keyword id="KW-1185">Reference proteome</keyword>
<keyword id="KW-0862">Zinc</keyword>